<protein>
    <recommendedName>
        <fullName evidence="1">Large ribosomal subunit protein uL22</fullName>
    </recommendedName>
    <alternativeName>
        <fullName evidence="2">50S ribosomal protein L22</fullName>
    </alternativeName>
</protein>
<feature type="chain" id="PRO_1000086547" description="Large ribosomal subunit protein uL22">
    <location>
        <begin position="1"/>
        <end position="130"/>
    </location>
</feature>
<accession>B0RB44</accession>
<gene>
    <name evidence="1" type="primary">rplV</name>
    <name type="ordered locus">CMS0288</name>
</gene>
<sequence length="130" mass="14293">MVESIARVRHIRVTPQKARRVVDMIRGKQAEEALAILKFAPQGASEPIYKLVASAMANARVKADASNSFLAEQDLYIAKAFVDEGTTLKRFQPRAQGRAFRINKRTSHITVVLATPDEADVATTAKKASK</sequence>
<dbReference type="EMBL" id="AM849034">
    <property type="protein sequence ID" value="CAQ00409.1"/>
    <property type="molecule type" value="Genomic_DNA"/>
</dbReference>
<dbReference type="RefSeq" id="WP_012297757.1">
    <property type="nucleotide sequence ID" value="NZ_MZMN01000003.1"/>
</dbReference>
<dbReference type="SMR" id="B0RB44"/>
<dbReference type="STRING" id="31964.CMS0288"/>
<dbReference type="KEGG" id="cms:CMS0288"/>
<dbReference type="eggNOG" id="COG0091">
    <property type="taxonomic scope" value="Bacteria"/>
</dbReference>
<dbReference type="HOGENOM" id="CLU_083987_3_3_11"/>
<dbReference type="OrthoDB" id="9805969at2"/>
<dbReference type="Proteomes" id="UP000001318">
    <property type="component" value="Chromosome"/>
</dbReference>
<dbReference type="GO" id="GO:0022625">
    <property type="term" value="C:cytosolic large ribosomal subunit"/>
    <property type="evidence" value="ECO:0007669"/>
    <property type="project" value="TreeGrafter"/>
</dbReference>
<dbReference type="GO" id="GO:0019843">
    <property type="term" value="F:rRNA binding"/>
    <property type="evidence" value="ECO:0007669"/>
    <property type="project" value="UniProtKB-UniRule"/>
</dbReference>
<dbReference type="GO" id="GO:0003735">
    <property type="term" value="F:structural constituent of ribosome"/>
    <property type="evidence" value="ECO:0007669"/>
    <property type="project" value="InterPro"/>
</dbReference>
<dbReference type="GO" id="GO:0006412">
    <property type="term" value="P:translation"/>
    <property type="evidence" value="ECO:0007669"/>
    <property type="project" value="UniProtKB-UniRule"/>
</dbReference>
<dbReference type="CDD" id="cd00336">
    <property type="entry name" value="Ribosomal_L22"/>
    <property type="match status" value="1"/>
</dbReference>
<dbReference type="Gene3D" id="3.90.470.10">
    <property type="entry name" value="Ribosomal protein L22/L17"/>
    <property type="match status" value="1"/>
</dbReference>
<dbReference type="HAMAP" id="MF_01331_B">
    <property type="entry name" value="Ribosomal_uL22_B"/>
    <property type="match status" value="1"/>
</dbReference>
<dbReference type="InterPro" id="IPR001063">
    <property type="entry name" value="Ribosomal_uL22"/>
</dbReference>
<dbReference type="InterPro" id="IPR005727">
    <property type="entry name" value="Ribosomal_uL22_bac/chlpt-type"/>
</dbReference>
<dbReference type="InterPro" id="IPR047867">
    <property type="entry name" value="Ribosomal_uL22_bac/org-type"/>
</dbReference>
<dbReference type="InterPro" id="IPR018260">
    <property type="entry name" value="Ribosomal_uL22_CS"/>
</dbReference>
<dbReference type="InterPro" id="IPR036394">
    <property type="entry name" value="Ribosomal_uL22_sf"/>
</dbReference>
<dbReference type="NCBIfam" id="TIGR01044">
    <property type="entry name" value="rplV_bact"/>
    <property type="match status" value="1"/>
</dbReference>
<dbReference type="PANTHER" id="PTHR13501">
    <property type="entry name" value="CHLOROPLAST 50S RIBOSOMAL PROTEIN L22-RELATED"/>
    <property type="match status" value="1"/>
</dbReference>
<dbReference type="PANTHER" id="PTHR13501:SF8">
    <property type="entry name" value="LARGE RIBOSOMAL SUBUNIT PROTEIN UL22M"/>
    <property type="match status" value="1"/>
</dbReference>
<dbReference type="Pfam" id="PF00237">
    <property type="entry name" value="Ribosomal_L22"/>
    <property type="match status" value="1"/>
</dbReference>
<dbReference type="SUPFAM" id="SSF54843">
    <property type="entry name" value="Ribosomal protein L22"/>
    <property type="match status" value="1"/>
</dbReference>
<dbReference type="PROSITE" id="PS00464">
    <property type="entry name" value="RIBOSOMAL_L22"/>
    <property type="match status" value="1"/>
</dbReference>
<reference key="1">
    <citation type="journal article" date="2008" name="J. Bacteriol.">
        <title>Genome of the actinomycete plant pathogen Clavibacter michiganensis subsp. sepedonicus suggests recent niche adaptation.</title>
        <authorList>
            <person name="Bentley S.D."/>
            <person name="Corton C."/>
            <person name="Brown S.E."/>
            <person name="Barron A."/>
            <person name="Clark L."/>
            <person name="Doggett J."/>
            <person name="Harris B."/>
            <person name="Ormond D."/>
            <person name="Quail M.A."/>
            <person name="May G."/>
            <person name="Francis D."/>
            <person name="Knudson D."/>
            <person name="Parkhill J."/>
            <person name="Ishimaru C.A."/>
        </authorList>
    </citation>
    <scope>NUCLEOTIDE SEQUENCE [LARGE SCALE GENOMIC DNA]</scope>
    <source>
        <strain>ATCC 33113 / DSM 20744 / JCM 9667 / LMG 2889 / ICMP 2535 / C-1</strain>
    </source>
</reference>
<evidence type="ECO:0000255" key="1">
    <source>
        <dbReference type="HAMAP-Rule" id="MF_01331"/>
    </source>
</evidence>
<evidence type="ECO:0000305" key="2"/>
<name>RL22_CLASE</name>
<proteinExistence type="inferred from homology"/>
<comment type="function">
    <text evidence="1">This protein binds specifically to 23S rRNA; its binding is stimulated by other ribosomal proteins, e.g. L4, L17, and L20. It is important during the early stages of 50S assembly. It makes multiple contacts with different domains of the 23S rRNA in the assembled 50S subunit and ribosome (By similarity).</text>
</comment>
<comment type="function">
    <text evidence="1">The globular domain of the protein is located near the polypeptide exit tunnel on the outside of the subunit, while an extended beta-hairpin is found that lines the wall of the exit tunnel in the center of the 70S ribosome.</text>
</comment>
<comment type="subunit">
    <text evidence="1">Part of the 50S ribosomal subunit.</text>
</comment>
<comment type="similarity">
    <text evidence="1">Belongs to the universal ribosomal protein uL22 family.</text>
</comment>
<keyword id="KW-0687">Ribonucleoprotein</keyword>
<keyword id="KW-0689">Ribosomal protein</keyword>
<keyword id="KW-0694">RNA-binding</keyword>
<keyword id="KW-0699">rRNA-binding</keyword>
<organism>
    <name type="scientific">Clavibacter sepedonicus</name>
    <name type="common">Clavibacter michiganensis subsp. sepedonicus</name>
    <dbReference type="NCBI Taxonomy" id="31964"/>
    <lineage>
        <taxon>Bacteria</taxon>
        <taxon>Bacillati</taxon>
        <taxon>Actinomycetota</taxon>
        <taxon>Actinomycetes</taxon>
        <taxon>Micrococcales</taxon>
        <taxon>Microbacteriaceae</taxon>
        <taxon>Clavibacter</taxon>
    </lineage>
</organism>